<organism>
    <name type="scientific">Colwellia psychrerythraea (strain 34H / ATCC BAA-681)</name>
    <name type="common">Vibrio psychroerythus</name>
    <dbReference type="NCBI Taxonomy" id="167879"/>
    <lineage>
        <taxon>Bacteria</taxon>
        <taxon>Pseudomonadati</taxon>
        <taxon>Pseudomonadota</taxon>
        <taxon>Gammaproteobacteria</taxon>
        <taxon>Alteromonadales</taxon>
        <taxon>Colwelliaceae</taxon>
        <taxon>Colwellia</taxon>
    </lineage>
</organism>
<reference key="1">
    <citation type="journal article" date="2005" name="Proc. Natl. Acad. Sci. U.S.A.">
        <title>The psychrophilic lifestyle as revealed by the genome sequence of Colwellia psychrerythraea 34H through genomic and proteomic analyses.</title>
        <authorList>
            <person name="Methe B.A."/>
            <person name="Nelson K.E."/>
            <person name="Deming J.W."/>
            <person name="Momen B."/>
            <person name="Melamud E."/>
            <person name="Zhang X."/>
            <person name="Moult J."/>
            <person name="Madupu R."/>
            <person name="Nelson W.C."/>
            <person name="Dodson R.J."/>
            <person name="Brinkac L.M."/>
            <person name="Daugherty S.C."/>
            <person name="Durkin A.S."/>
            <person name="DeBoy R.T."/>
            <person name="Kolonay J.F."/>
            <person name="Sullivan S.A."/>
            <person name="Zhou L."/>
            <person name="Davidsen T.M."/>
            <person name="Wu M."/>
            <person name="Huston A.L."/>
            <person name="Lewis M."/>
            <person name="Weaver B."/>
            <person name="Weidman J.F."/>
            <person name="Khouri H."/>
            <person name="Utterback T.R."/>
            <person name="Feldblyum T.V."/>
            <person name="Fraser C.M."/>
        </authorList>
    </citation>
    <scope>NUCLEOTIDE SEQUENCE [LARGE SCALE GENOMIC DNA]</scope>
    <source>
        <strain>34H / ATCC BAA-681</strain>
    </source>
</reference>
<gene>
    <name evidence="1" type="primary">apt</name>
    <name type="ordered locus">CPS_3745</name>
</gene>
<feature type="chain" id="PRO_0000321357" description="Adenine phosphoribosyltransferase">
    <location>
        <begin position="1"/>
        <end position="181"/>
    </location>
</feature>
<sequence length="181" mass="20074">MNKTQQQLLINAIHTIPDYPVEGIMFRDVTSLLEDAEAFKLVMELLENKYKGRGFTKIVGTEARGFLFGAPLALALNIGFIPVRKPGKLPRPTYSQAYQLEYGEDILEIHQDALTPEDNVLIIDDLLATGGTIEATTKLIRRLGAQVQEAGFVISLPDLGGEERLAELNITPYSLIQYQGE</sequence>
<protein>
    <recommendedName>
        <fullName evidence="1">Adenine phosphoribosyltransferase</fullName>
        <shortName evidence="1">APRT</shortName>
        <ecNumber evidence="1">2.4.2.7</ecNumber>
    </recommendedName>
</protein>
<proteinExistence type="inferred from homology"/>
<comment type="function">
    <text evidence="1">Catalyzes a salvage reaction resulting in the formation of AMP, that is energically less costly than de novo synthesis.</text>
</comment>
<comment type="catalytic activity">
    <reaction evidence="1">
        <text>AMP + diphosphate = 5-phospho-alpha-D-ribose 1-diphosphate + adenine</text>
        <dbReference type="Rhea" id="RHEA:16609"/>
        <dbReference type="ChEBI" id="CHEBI:16708"/>
        <dbReference type="ChEBI" id="CHEBI:33019"/>
        <dbReference type="ChEBI" id="CHEBI:58017"/>
        <dbReference type="ChEBI" id="CHEBI:456215"/>
        <dbReference type="EC" id="2.4.2.7"/>
    </reaction>
</comment>
<comment type="pathway">
    <text evidence="1">Purine metabolism; AMP biosynthesis via salvage pathway; AMP from adenine: step 1/1.</text>
</comment>
<comment type="subunit">
    <text evidence="1">Homodimer.</text>
</comment>
<comment type="subcellular location">
    <subcellularLocation>
        <location evidence="1">Cytoplasm</location>
    </subcellularLocation>
</comment>
<comment type="similarity">
    <text evidence="1">Belongs to the purine/pyrimidine phosphoribosyltransferase family.</text>
</comment>
<name>APT_COLP3</name>
<keyword id="KW-0963">Cytoplasm</keyword>
<keyword id="KW-0328">Glycosyltransferase</keyword>
<keyword id="KW-0660">Purine salvage</keyword>
<keyword id="KW-0808">Transferase</keyword>
<accession>Q47XQ8</accession>
<dbReference type="EC" id="2.4.2.7" evidence="1"/>
<dbReference type="EMBL" id="CP000083">
    <property type="protein sequence ID" value="AAZ28636.1"/>
    <property type="molecule type" value="Genomic_DNA"/>
</dbReference>
<dbReference type="RefSeq" id="WP_011044498.1">
    <property type="nucleotide sequence ID" value="NC_003910.7"/>
</dbReference>
<dbReference type="SMR" id="Q47XQ8"/>
<dbReference type="STRING" id="167879.CPS_3745"/>
<dbReference type="KEGG" id="cps:CPS_3745"/>
<dbReference type="eggNOG" id="COG0503">
    <property type="taxonomic scope" value="Bacteria"/>
</dbReference>
<dbReference type="HOGENOM" id="CLU_063339_3_0_6"/>
<dbReference type="UniPathway" id="UPA00588">
    <property type="reaction ID" value="UER00646"/>
</dbReference>
<dbReference type="Proteomes" id="UP000000547">
    <property type="component" value="Chromosome"/>
</dbReference>
<dbReference type="GO" id="GO:0005737">
    <property type="term" value="C:cytoplasm"/>
    <property type="evidence" value="ECO:0007669"/>
    <property type="project" value="UniProtKB-SubCell"/>
</dbReference>
<dbReference type="GO" id="GO:0002055">
    <property type="term" value="F:adenine binding"/>
    <property type="evidence" value="ECO:0007669"/>
    <property type="project" value="TreeGrafter"/>
</dbReference>
<dbReference type="GO" id="GO:0003999">
    <property type="term" value="F:adenine phosphoribosyltransferase activity"/>
    <property type="evidence" value="ECO:0007669"/>
    <property type="project" value="UniProtKB-UniRule"/>
</dbReference>
<dbReference type="GO" id="GO:0016208">
    <property type="term" value="F:AMP binding"/>
    <property type="evidence" value="ECO:0007669"/>
    <property type="project" value="TreeGrafter"/>
</dbReference>
<dbReference type="GO" id="GO:0006168">
    <property type="term" value="P:adenine salvage"/>
    <property type="evidence" value="ECO:0007669"/>
    <property type="project" value="InterPro"/>
</dbReference>
<dbReference type="GO" id="GO:0044209">
    <property type="term" value="P:AMP salvage"/>
    <property type="evidence" value="ECO:0007669"/>
    <property type="project" value="UniProtKB-UniRule"/>
</dbReference>
<dbReference type="GO" id="GO:0006166">
    <property type="term" value="P:purine ribonucleoside salvage"/>
    <property type="evidence" value="ECO:0007669"/>
    <property type="project" value="UniProtKB-KW"/>
</dbReference>
<dbReference type="CDD" id="cd06223">
    <property type="entry name" value="PRTases_typeI"/>
    <property type="match status" value="1"/>
</dbReference>
<dbReference type="FunFam" id="3.40.50.2020:FF:000004">
    <property type="entry name" value="Adenine phosphoribosyltransferase"/>
    <property type="match status" value="1"/>
</dbReference>
<dbReference type="Gene3D" id="3.40.50.2020">
    <property type="match status" value="1"/>
</dbReference>
<dbReference type="HAMAP" id="MF_00004">
    <property type="entry name" value="Aden_phosphoribosyltr"/>
    <property type="match status" value="1"/>
</dbReference>
<dbReference type="InterPro" id="IPR005764">
    <property type="entry name" value="Ade_phspho_trans"/>
</dbReference>
<dbReference type="InterPro" id="IPR000836">
    <property type="entry name" value="PRibTrfase_dom"/>
</dbReference>
<dbReference type="InterPro" id="IPR029057">
    <property type="entry name" value="PRTase-like"/>
</dbReference>
<dbReference type="InterPro" id="IPR050054">
    <property type="entry name" value="UPRTase/APRTase"/>
</dbReference>
<dbReference type="NCBIfam" id="TIGR01090">
    <property type="entry name" value="apt"/>
    <property type="match status" value="1"/>
</dbReference>
<dbReference type="NCBIfam" id="NF002632">
    <property type="entry name" value="PRK02304.1-1"/>
    <property type="match status" value="1"/>
</dbReference>
<dbReference type="NCBIfam" id="NF002634">
    <property type="entry name" value="PRK02304.1-3"/>
    <property type="match status" value="1"/>
</dbReference>
<dbReference type="NCBIfam" id="NF002636">
    <property type="entry name" value="PRK02304.1-5"/>
    <property type="match status" value="1"/>
</dbReference>
<dbReference type="PANTHER" id="PTHR32315">
    <property type="entry name" value="ADENINE PHOSPHORIBOSYLTRANSFERASE"/>
    <property type="match status" value="1"/>
</dbReference>
<dbReference type="PANTHER" id="PTHR32315:SF3">
    <property type="entry name" value="ADENINE PHOSPHORIBOSYLTRANSFERASE"/>
    <property type="match status" value="1"/>
</dbReference>
<dbReference type="Pfam" id="PF00156">
    <property type="entry name" value="Pribosyltran"/>
    <property type="match status" value="1"/>
</dbReference>
<dbReference type="SUPFAM" id="SSF53271">
    <property type="entry name" value="PRTase-like"/>
    <property type="match status" value="1"/>
</dbReference>
<dbReference type="PROSITE" id="PS00103">
    <property type="entry name" value="PUR_PYR_PR_TRANSFER"/>
    <property type="match status" value="1"/>
</dbReference>
<evidence type="ECO:0000255" key="1">
    <source>
        <dbReference type="HAMAP-Rule" id="MF_00004"/>
    </source>
</evidence>